<evidence type="ECO:0000250" key="1">
    <source>
        <dbReference type="UniProtKB" id="Q4K423"/>
    </source>
</evidence>
<evidence type="ECO:0000269" key="2">
    <source>
    </source>
</evidence>
<evidence type="ECO:0000303" key="3">
    <source>
    </source>
</evidence>
<evidence type="ECO:0000303" key="4">
    <source>
    </source>
</evidence>
<evidence type="ECO:0000305" key="5"/>
<reference key="1">
    <citation type="journal article" date="2012" name="Biosci. Biotechnol. Biochem.">
        <title>Molecular and catalytic properties of monoacetylphloroglucinol acetyltransferase from Pseudomonas sp. YGJ3.</title>
        <authorList>
            <person name="Hayashi A."/>
            <person name="Saitou H."/>
            <person name="Mori T."/>
            <person name="Matano I."/>
            <person name="Sugisaki H."/>
            <person name="Maruyama K."/>
        </authorList>
    </citation>
    <scope>NUCLEOTIDE SEQUENCE [GENOMIC DNA]</scope>
    <source>
        <strain>YGJ3</strain>
    </source>
</reference>
<reference key="2">
    <citation type="journal article" date="2012" name="Biosci. Biotechnol. Biochem.">
        <title>Molecular and catalytic properties of 2,4-diacetylphloroglucinol hydrolase (PhlG) from Pseudomonas sp. YGJ3.</title>
        <authorList>
            <person name="Saitou H."/>
            <person name="Watanabe M."/>
            <person name="Maruyama K."/>
        </authorList>
    </citation>
    <scope>FUNCTION</scope>
    <scope>CATALYTIC ACTIVITY</scope>
    <scope>COFACTOR</scope>
    <scope>ACTIVITY REGULATION</scope>
    <scope>BIOPHYSICOCHEMICAL PROPERTIES</scope>
    <scope>SUBUNIT</scope>
    <source>
        <strain>YGJ3</strain>
    </source>
</reference>
<sequence length="294" mass="33675">MEARNMTPFTYFSLPMQKLFLRNQAAVRNKPYAKYFRTEMRVPLSAVRKIQQGPMALEDTLTPSIEDINRLLEPDFVSEESGYALLPGPMAYVQSRKFFPGCTAQMFKWWFIWHPAESERYTLWFPYAHVSNPCVHHQRLCDESLSFEERLYGNTFCASEYVGDRLMHLHIDFQQPASLGLNTDLYREAKIDGSVSALMSLADHPEVPVSLMVHLFKEVPGGMYLTSRYWVGAHPSMARFPGAEKAASLLKENGFGEAELETLAYEFAVHDMCEFNHLASFLPDLYREFGTPAA</sequence>
<name>PHLG_PSESP</name>
<accession>F7J5X9</accession>
<dbReference type="EC" id="3.7.1.24" evidence="2"/>
<dbReference type="EMBL" id="AB636682">
    <property type="protein sequence ID" value="BAK39611.1"/>
    <property type="molecule type" value="Genomic_DNA"/>
</dbReference>
<dbReference type="SMR" id="F7J5X9"/>
<dbReference type="KEGG" id="ag:BAK39611"/>
<dbReference type="BRENDA" id="3.7.1.24">
    <property type="organism ID" value="5085"/>
</dbReference>
<dbReference type="GO" id="GO:0016787">
    <property type="term" value="F:hydrolase activity"/>
    <property type="evidence" value="ECO:0007669"/>
    <property type="project" value="UniProtKB-KW"/>
</dbReference>
<dbReference type="GO" id="GO:0046872">
    <property type="term" value="F:metal ion binding"/>
    <property type="evidence" value="ECO:0007669"/>
    <property type="project" value="UniProtKB-KW"/>
</dbReference>
<dbReference type="InterPro" id="IPR041526">
    <property type="entry name" value="DAPG_hydrolase"/>
</dbReference>
<dbReference type="Pfam" id="PF18089">
    <property type="entry name" value="DAPG_hydrolase"/>
    <property type="match status" value="1"/>
</dbReference>
<keyword id="KW-0378">Hydrolase</keyword>
<keyword id="KW-0479">Metal-binding</keyword>
<keyword id="KW-0862">Zinc</keyword>
<gene>
    <name evidence="3" type="primary">phlG</name>
</gene>
<organism>
    <name type="scientific">Pseudomonas sp</name>
    <dbReference type="NCBI Taxonomy" id="306"/>
    <lineage>
        <taxon>Bacteria</taxon>
        <taxon>Pseudomonadati</taxon>
        <taxon>Pseudomonadota</taxon>
        <taxon>Gammaproteobacteria</taxon>
        <taxon>Pseudomonadales</taxon>
        <taxon>Pseudomonadaceae</taxon>
        <taxon>Pseudomonas</taxon>
    </lineage>
</organism>
<proteinExistence type="evidence at protein level"/>
<protein>
    <recommendedName>
        <fullName evidence="4">2,4-diacetylphloroglucinol hydrolase</fullName>
        <shortName evidence="3">DAPG hydrolase</shortName>
        <ecNumber evidence="2">3.7.1.24</ecNumber>
    </recommendedName>
</protein>
<comment type="function">
    <text evidence="2">Hydrolase that specifically degrades the potent antimicrobial compound 2,4-diacetylphloroglucinol (DAPG) to equimolar amounts of mildly toxic monoacetylphloroglucinol (MAPG) and acetate.</text>
</comment>
<comment type="catalytic activity">
    <reaction evidence="2">
        <text>2,4-diacetylphloroglucinol + H2O = 2-acetylphloroglucinol + acetate</text>
        <dbReference type="Rhea" id="RHEA:59184"/>
        <dbReference type="ChEBI" id="CHEBI:15377"/>
        <dbReference type="ChEBI" id="CHEBI:30089"/>
        <dbReference type="ChEBI" id="CHEBI:64344"/>
        <dbReference type="ChEBI" id="CHEBI:140662"/>
        <dbReference type="EC" id="3.7.1.24"/>
    </reaction>
</comment>
<comment type="cofactor">
    <cofactor evidence="2">
        <name>Zn(2+)</name>
        <dbReference type="ChEBI" id="CHEBI:29105"/>
    </cofactor>
</comment>
<comment type="activity regulation">
    <text evidence="2">Specifically and significantly activated by CoCl(2). Competitively inhibited by MAPG, but not by 2-hydroxy- and 4-hydroxyacetophenone.</text>
</comment>
<comment type="biophysicochemical properties">
    <kinetics>
        <KM evidence="2">24 uM for DAPG</KM>
        <text evidence="2">kcat is 5.8 sec(-1).</text>
    </kinetics>
    <phDependence>
        <text evidence="2">Optimum pH is about 6.0.</text>
    </phDependence>
</comment>
<comment type="subunit">
    <text evidence="2">Homodimer.</text>
</comment>
<comment type="similarity">
    <text evidence="5">Belongs to the DAPG/phloretin hydrolase family.</text>
</comment>
<feature type="chain" id="PRO_0000450528" description="2,4-diacetylphloroglucinol hydrolase">
    <location>
        <begin position="1"/>
        <end position="294"/>
    </location>
</feature>
<feature type="binding site" evidence="1">
    <location>
        <position position="129"/>
    </location>
    <ligand>
        <name>Zn(2+)</name>
        <dbReference type="ChEBI" id="CHEBI:29105"/>
    </ligand>
</feature>
<feature type="binding site" evidence="1">
    <location>
        <position position="160"/>
    </location>
    <ligand>
        <name>Zn(2+)</name>
        <dbReference type="ChEBI" id="CHEBI:29105"/>
    </ligand>
</feature>
<feature type="binding site" evidence="1">
    <location>
        <position position="270"/>
    </location>
    <ligand>
        <name>Zn(2+)</name>
        <dbReference type="ChEBI" id="CHEBI:29105"/>
    </ligand>
</feature>
<feature type="binding site" evidence="1">
    <location>
        <position position="274"/>
    </location>
    <ligand>
        <name>Zn(2+)</name>
        <dbReference type="ChEBI" id="CHEBI:29105"/>
    </ligand>
</feature>